<keyword id="KW-0067">ATP-binding</keyword>
<keyword id="KW-1003">Cell membrane</keyword>
<keyword id="KW-0472">Membrane</keyword>
<keyword id="KW-0547">Nucleotide-binding</keyword>
<keyword id="KW-1278">Translocase</keyword>
<keyword id="KW-0813">Transport</keyword>
<name>POTA_STAAC</name>
<accession>Q5HGY5</accession>
<feature type="chain" id="PRO_0000092754" description="Spermidine/putrescine import ATP-binding protein PotA">
    <location>
        <begin position="1"/>
        <end position="364"/>
    </location>
</feature>
<feature type="domain" description="ABC transporter" evidence="1">
    <location>
        <begin position="5"/>
        <end position="235"/>
    </location>
</feature>
<feature type="binding site" evidence="1">
    <location>
        <begin position="37"/>
        <end position="44"/>
    </location>
    <ligand>
        <name>ATP</name>
        <dbReference type="ChEBI" id="CHEBI:30616"/>
    </ligand>
</feature>
<comment type="function">
    <text evidence="1">Part of the ABC transporter complex PotABCD involved in spermidine/putrescine import. Responsible for energy coupling to the transport system.</text>
</comment>
<comment type="catalytic activity">
    <reaction evidence="1">
        <text>ATP + H2O + polyamine-[polyamine-binding protein]Side 1 = ADP + phosphate + polyamineSide 2 + [polyamine-binding protein]Side 1.</text>
        <dbReference type="EC" id="7.6.2.11"/>
    </reaction>
</comment>
<comment type="subunit">
    <text evidence="1">The complex is composed of two ATP-binding proteins (PotA), two transmembrane proteins (PotB and PotC) and a solute-binding protein (PotD).</text>
</comment>
<comment type="subcellular location">
    <subcellularLocation>
        <location evidence="1">Cell membrane</location>
        <topology evidence="1">Peripheral membrane protein</topology>
    </subcellularLocation>
</comment>
<comment type="similarity">
    <text evidence="1">Belongs to the ABC transporter superfamily. Spermidine/putrescine importer (TC 3.A.1.11.1) family.</text>
</comment>
<sequence>MEPLLSLKSVSKSYDDLNILDDIDIDIESGYFYTLLGPSGCGKTTILKLIAGFEYPDSGEVIYQNKPIGNLPPNKRKVNTVFQDYALFPHLNVYDNIAFGLKLKKLSKTEIDQKVTEALKLVKLSGYEKRNINEMSGGQKQRVAIARAIVNEPEILLLDESLSALDLKLRTEMQYELRELQSRLGITFIFVTHDQEEALALSDFLFVLKDGKIQQFGTPTDIYDEPVNRFVADFIGESNIVEGRMVRDYVVNIYGQDFECVDMGIPENKKVEVVIRPEDISLIKAEEGLFKATVDSMLFRGVHYEICCIDNKGYEWVIQTTKKAEVGSEVGLYFDPEAIHIMVPGETEEEFDKRIESYEEVDNA</sequence>
<dbReference type="EC" id="7.6.2.11" evidence="1"/>
<dbReference type="EMBL" id="CP000046">
    <property type="protein sequence ID" value="AAW37988.1"/>
    <property type="molecule type" value="Genomic_DNA"/>
</dbReference>
<dbReference type="RefSeq" id="WP_000433551.1">
    <property type="nucleotide sequence ID" value="NZ_JBGOFO010000002.1"/>
</dbReference>
<dbReference type="SMR" id="Q5HGY5"/>
<dbReference type="TCDB" id="3.A.1.11.8">
    <property type="family name" value="the atp-binding cassette (abc) superfamily"/>
</dbReference>
<dbReference type="KEGG" id="sac:SACOL1108"/>
<dbReference type="HOGENOM" id="CLU_000604_1_1_9"/>
<dbReference type="Proteomes" id="UP000000530">
    <property type="component" value="Chromosome"/>
</dbReference>
<dbReference type="GO" id="GO:0043190">
    <property type="term" value="C:ATP-binding cassette (ABC) transporter complex"/>
    <property type="evidence" value="ECO:0007669"/>
    <property type="project" value="InterPro"/>
</dbReference>
<dbReference type="GO" id="GO:0015417">
    <property type="term" value="F:ABC-type polyamine transporter activity"/>
    <property type="evidence" value="ECO:0007669"/>
    <property type="project" value="UniProtKB-EC"/>
</dbReference>
<dbReference type="GO" id="GO:0005524">
    <property type="term" value="F:ATP binding"/>
    <property type="evidence" value="ECO:0007669"/>
    <property type="project" value="UniProtKB-KW"/>
</dbReference>
<dbReference type="GO" id="GO:0016887">
    <property type="term" value="F:ATP hydrolysis activity"/>
    <property type="evidence" value="ECO:0007669"/>
    <property type="project" value="InterPro"/>
</dbReference>
<dbReference type="FunFam" id="3.40.50.300:FF:000133">
    <property type="entry name" value="Spermidine/putrescine import ATP-binding protein PotA"/>
    <property type="match status" value="1"/>
</dbReference>
<dbReference type="Gene3D" id="2.40.50.100">
    <property type="match status" value="1"/>
</dbReference>
<dbReference type="Gene3D" id="3.40.50.300">
    <property type="entry name" value="P-loop containing nucleotide triphosphate hydrolases"/>
    <property type="match status" value="1"/>
</dbReference>
<dbReference type="InterPro" id="IPR003593">
    <property type="entry name" value="AAA+_ATPase"/>
</dbReference>
<dbReference type="InterPro" id="IPR050093">
    <property type="entry name" value="ABC_SmlMolc_Importer"/>
</dbReference>
<dbReference type="InterPro" id="IPR003439">
    <property type="entry name" value="ABC_transporter-like_ATP-bd"/>
</dbReference>
<dbReference type="InterPro" id="IPR017871">
    <property type="entry name" value="ABC_transporter-like_CS"/>
</dbReference>
<dbReference type="InterPro" id="IPR008995">
    <property type="entry name" value="Mo/tungstate-bd_C_term_dom"/>
</dbReference>
<dbReference type="InterPro" id="IPR027417">
    <property type="entry name" value="P-loop_NTPase"/>
</dbReference>
<dbReference type="InterPro" id="IPR013611">
    <property type="entry name" value="Transp-assoc_OB_typ2"/>
</dbReference>
<dbReference type="PANTHER" id="PTHR42781">
    <property type="entry name" value="SPERMIDINE/PUTRESCINE IMPORT ATP-BINDING PROTEIN POTA"/>
    <property type="match status" value="1"/>
</dbReference>
<dbReference type="PANTHER" id="PTHR42781:SF4">
    <property type="entry name" value="SPERMIDINE_PUTRESCINE IMPORT ATP-BINDING PROTEIN POTA"/>
    <property type="match status" value="1"/>
</dbReference>
<dbReference type="Pfam" id="PF00005">
    <property type="entry name" value="ABC_tran"/>
    <property type="match status" value="1"/>
</dbReference>
<dbReference type="Pfam" id="PF08402">
    <property type="entry name" value="TOBE_2"/>
    <property type="match status" value="1"/>
</dbReference>
<dbReference type="SMART" id="SM00382">
    <property type="entry name" value="AAA"/>
    <property type="match status" value="1"/>
</dbReference>
<dbReference type="SUPFAM" id="SSF50331">
    <property type="entry name" value="MOP-like"/>
    <property type="match status" value="1"/>
</dbReference>
<dbReference type="SUPFAM" id="SSF52540">
    <property type="entry name" value="P-loop containing nucleoside triphosphate hydrolases"/>
    <property type="match status" value="1"/>
</dbReference>
<dbReference type="PROSITE" id="PS00211">
    <property type="entry name" value="ABC_TRANSPORTER_1"/>
    <property type="match status" value="1"/>
</dbReference>
<dbReference type="PROSITE" id="PS50893">
    <property type="entry name" value="ABC_TRANSPORTER_2"/>
    <property type="match status" value="1"/>
</dbReference>
<dbReference type="PROSITE" id="PS51305">
    <property type="entry name" value="POTA"/>
    <property type="match status" value="1"/>
</dbReference>
<gene>
    <name evidence="1" type="primary">potA</name>
    <name type="ordered locus">SACOL1108</name>
</gene>
<protein>
    <recommendedName>
        <fullName evidence="1">Spermidine/putrescine import ATP-binding protein PotA</fullName>
        <ecNumber evidence="1">7.6.2.11</ecNumber>
    </recommendedName>
</protein>
<proteinExistence type="inferred from homology"/>
<evidence type="ECO:0000255" key="1">
    <source>
        <dbReference type="HAMAP-Rule" id="MF_01726"/>
    </source>
</evidence>
<organism>
    <name type="scientific">Staphylococcus aureus (strain COL)</name>
    <dbReference type="NCBI Taxonomy" id="93062"/>
    <lineage>
        <taxon>Bacteria</taxon>
        <taxon>Bacillati</taxon>
        <taxon>Bacillota</taxon>
        <taxon>Bacilli</taxon>
        <taxon>Bacillales</taxon>
        <taxon>Staphylococcaceae</taxon>
        <taxon>Staphylococcus</taxon>
    </lineage>
</organism>
<reference key="1">
    <citation type="journal article" date="2005" name="J. Bacteriol.">
        <title>Insights on evolution of virulence and resistance from the complete genome analysis of an early methicillin-resistant Staphylococcus aureus strain and a biofilm-producing methicillin-resistant Staphylococcus epidermidis strain.</title>
        <authorList>
            <person name="Gill S.R."/>
            <person name="Fouts D.E."/>
            <person name="Archer G.L."/>
            <person name="Mongodin E.F."/>
            <person name="DeBoy R.T."/>
            <person name="Ravel J."/>
            <person name="Paulsen I.T."/>
            <person name="Kolonay J.F."/>
            <person name="Brinkac L.M."/>
            <person name="Beanan M.J."/>
            <person name="Dodson R.J."/>
            <person name="Daugherty S.C."/>
            <person name="Madupu R."/>
            <person name="Angiuoli S.V."/>
            <person name="Durkin A.S."/>
            <person name="Haft D.H."/>
            <person name="Vamathevan J.J."/>
            <person name="Khouri H."/>
            <person name="Utterback T.R."/>
            <person name="Lee C."/>
            <person name="Dimitrov G."/>
            <person name="Jiang L."/>
            <person name="Qin H."/>
            <person name="Weidman J."/>
            <person name="Tran K."/>
            <person name="Kang K.H."/>
            <person name="Hance I.R."/>
            <person name="Nelson K.E."/>
            <person name="Fraser C.M."/>
        </authorList>
    </citation>
    <scope>NUCLEOTIDE SEQUENCE [LARGE SCALE GENOMIC DNA]</scope>
    <source>
        <strain>COL</strain>
    </source>
</reference>